<accession>K2RYB6</accession>
<organism>
    <name type="scientific">Macrophomina phaseolina (strain MS6)</name>
    <name type="common">Charcoal rot fungus</name>
    <dbReference type="NCBI Taxonomy" id="1126212"/>
    <lineage>
        <taxon>Eukaryota</taxon>
        <taxon>Fungi</taxon>
        <taxon>Dikarya</taxon>
        <taxon>Ascomycota</taxon>
        <taxon>Pezizomycotina</taxon>
        <taxon>Dothideomycetes</taxon>
        <taxon>Dothideomycetes incertae sedis</taxon>
        <taxon>Botryosphaeriales</taxon>
        <taxon>Botryosphaeriaceae</taxon>
        <taxon>Macrophomina</taxon>
    </lineage>
</organism>
<dbReference type="EMBL" id="AHHD01000324">
    <property type="protein sequence ID" value="EKG15179.1"/>
    <property type="molecule type" value="Genomic_DNA"/>
</dbReference>
<dbReference type="SMR" id="K2RYB6"/>
<dbReference type="STRING" id="1126212.K2RYB6"/>
<dbReference type="VEuPathDB" id="FungiDB:MPH_07626"/>
<dbReference type="eggNOG" id="KOG0255">
    <property type="taxonomic scope" value="Eukaryota"/>
</dbReference>
<dbReference type="HOGENOM" id="CLU_008455_1_1_1"/>
<dbReference type="InParanoid" id="K2RYB6"/>
<dbReference type="OrthoDB" id="5296287at2759"/>
<dbReference type="Proteomes" id="UP000007129">
    <property type="component" value="Unassembled WGS sequence"/>
</dbReference>
<dbReference type="GO" id="GO:0016020">
    <property type="term" value="C:membrane"/>
    <property type="evidence" value="ECO:0007669"/>
    <property type="project" value="UniProtKB-SubCell"/>
</dbReference>
<dbReference type="GO" id="GO:0022857">
    <property type="term" value="F:transmembrane transporter activity"/>
    <property type="evidence" value="ECO:0007669"/>
    <property type="project" value="InterPro"/>
</dbReference>
<dbReference type="CDD" id="cd17323">
    <property type="entry name" value="MFS_Tpo1_MDR_like"/>
    <property type="match status" value="1"/>
</dbReference>
<dbReference type="FunFam" id="1.20.1250.20:FF:000011">
    <property type="entry name" value="MFS multidrug transporter, putative"/>
    <property type="match status" value="1"/>
</dbReference>
<dbReference type="Gene3D" id="1.20.1250.20">
    <property type="entry name" value="MFS general substrate transporter like domains"/>
    <property type="match status" value="1"/>
</dbReference>
<dbReference type="InterPro" id="IPR011701">
    <property type="entry name" value="MFS"/>
</dbReference>
<dbReference type="InterPro" id="IPR020846">
    <property type="entry name" value="MFS_dom"/>
</dbReference>
<dbReference type="InterPro" id="IPR036259">
    <property type="entry name" value="MFS_trans_sf"/>
</dbReference>
<dbReference type="PANTHER" id="PTHR23502">
    <property type="entry name" value="MAJOR FACILITATOR SUPERFAMILY"/>
    <property type="match status" value="1"/>
</dbReference>
<dbReference type="PANTHER" id="PTHR23502:SF68">
    <property type="entry name" value="MULTIDRUG TRANSPORTER, PUTATIVE (AFU_ORTHOLOGUE AFUA_3G01120)-RELATED"/>
    <property type="match status" value="1"/>
</dbReference>
<dbReference type="Pfam" id="PF07690">
    <property type="entry name" value="MFS_1"/>
    <property type="match status" value="1"/>
</dbReference>
<dbReference type="SUPFAM" id="SSF103473">
    <property type="entry name" value="MFS general substrate transporter"/>
    <property type="match status" value="1"/>
</dbReference>
<dbReference type="PROSITE" id="PS50850">
    <property type="entry name" value="MFS"/>
    <property type="match status" value="1"/>
</dbReference>
<comment type="function">
    <text evidence="4 7">MFS-type transporper; part of the gene cluster that mediates the biosynthesis of macrophasetins, 3-decalinoyltetramic acids (DTAs) which feature a tetramate (pyrrolidine-2,4-dione) unit connected to a decalin fragment and that have potent bioactivities (PubMed:36452919). Efflux pump that might be required for efficient secretion of macrophasetins (Probable).</text>
</comment>
<comment type="subcellular location">
    <subcellularLocation>
        <location>Membrane</location>
        <topology>Multi-pass membrane protein</topology>
    </subcellularLocation>
</comment>
<comment type="similarity">
    <text evidence="6">Belongs to the major facilitator superfamily.</text>
</comment>
<feature type="chain" id="PRO_0000457831" description="MFS-type transporper mpsC">
    <location>
        <begin position="1"/>
        <end position="511"/>
    </location>
</feature>
<feature type="transmembrane region" description="Helical" evidence="1">
    <location>
        <begin position="74"/>
        <end position="94"/>
    </location>
</feature>
<feature type="transmembrane region" description="Helical" evidence="1">
    <location>
        <begin position="108"/>
        <end position="128"/>
    </location>
</feature>
<feature type="transmembrane region" description="Helical" evidence="1">
    <location>
        <begin position="147"/>
        <end position="167"/>
    </location>
</feature>
<feature type="transmembrane region" description="Helical" evidence="1">
    <location>
        <begin position="169"/>
        <end position="189"/>
    </location>
</feature>
<feature type="transmembrane region" description="Helical" evidence="1">
    <location>
        <begin position="201"/>
        <end position="221"/>
    </location>
</feature>
<feature type="transmembrane region" description="Helical" evidence="1">
    <location>
        <begin position="228"/>
        <end position="248"/>
    </location>
</feature>
<feature type="transmembrane region" description="Helical" evidence="1">
    <location>
        <begin position="303"/>
        <end position="323"/>
    </location>
</feature>
<feature type="transmembrane region" description="Helical" evidence="1">
    <location>
        <begin position="342"/>
        <end position="362"/>
    </location>
</feature>
<feature type="transmembrane region" description="Helical" evidence="1">
    <location>
        <begin position="383"/>
        <end position="403"/>
    </location>
</feature>
<feature type="transmembrane region" description="Helical" evidence="1">
    <location>
        <begin position="411"/>
        <end position="431"/>
    </location>
</feature>
<feature type="transmembrane region" description="Helical" evidence="1">
    <location>
        <begin position="443"/>
        <end position="465"/>
    </location>
</feature>
<feature type="transmembrane region" description="Helical" evidence="1">
    <location>
        <begin position="476"/>
        <end position="496"/>
    </location>
</feature>
<feature type="region of interest" description="Disordered" evidence="3">
    <location>
        <begin position="1"/>
        <end position="65"/>
    </location>
</feature>
<feature type="compositionally biased region" description="Basic and acidic residues" evidence="3">
    <location>
        <begin position="1"/>
        <end position="35"/>
    </location>
</feature>
<feature type="glycosylation site" description="N-linked (GlcNAc...) asparagine" evidence="2">
    <location>
        <position position="337"/>
    </location>
</feature>
<evidence type="ECO:0000255" key="1"/>
<evidence type="ECO:0000255" key="2">
    <source>
        <dbReference type="PROSITE-ProRule" id="PRU00498"/>
    </source>
</evidence>
<evidence type="ECO:0000256" key="3">
    <source>
        <dbReference type="SAM" id="MobiDB-lite"/>
    </source>
</evidence>
<evidence type="ECO:0000269" key="4">
    <source>
    </source>
</evidence>
<evidence type="ECO:0000303" key="5">
    <source>
    </source>
</evidence>
<evidence type="ECO:0000305" key="6"/>
<evidence type="ECO:0000305" key="7">
    <source>
    </source>
</evidence>
<sequence>MTSSTESKHSNDESTDLEKQDAEESHGLPEERKQDIAAQLSSSDVQDPNLVDWDGPDDPANPMNWPKSKRLGHVVMASLTTLFANITSTAFAPAASSLEAEFGITSSITAALTVSIYLLGFAFGPLVIAPLSEHFGRLPVYRVCTVITVAFLIGCAQAKNLGMFLVFRLITGIAGSGPGTIGGGTIADVMAPENRGKAMGAFAMGPLMGPVLGPLMSGFIAQYLDWRWVFRVLCIATGVMTIVLYFVMTETYGPVLLKRKAARLRKETGNPDLHTKLEASGVSPLASLWMALQRPTKMLIFSPITLLLSLYCAFVFGLLILLFTTFSAVYRQQYGFNVSMGGLSYLGLGFGLAIGLVLFGMLSDKVAKKDSARSSEWKPEARLLLMVWFAPVIPGGFFWYGWTAYYKVHWILPMMGTSLIGMGALMVMMPIQVYLVDAFGPRVAASALAANTLLRSLAGCFLPLAGPSLYEALGLGWGNTLLGFIAIGFTCLPILFYRFGGKLRLRFPVTF</sequence>
<name>MPSC_MACPH</name>
<proteinExistence type="inferred from homology"/>
<protein>
    <recommendedName>
        <fullName evidence="5">MFS-type transporper mpsC</fullName>
    </recommendedName>
    <alternativeName>
        <fullName evidence="5">Macrophasetins biosynthesis cluster protein C</fullName>
    </alternativeName>
</protein>
<keyword id="KW-0325">Glycoprotein</keyword>
<keyword id="KW-0472">Membrane</keyword>
<keyword id="KW-1185">Reference proteome</keyword>
<keyword id="KW-0812">Transmembrane</keyword>
<keyword id="KW-1133">Transmembrane helix</keyword>
<keyword id="KW-0813">Transport</keyword>
<reference key="1">
    <citation type="journal article" date="2012" name="BMC Genomics">
        <title>Tools to kill: Genome of one of the most destructive plant pathogenic fungi Macrophomina phaseolina.</title>
        <authorList>
            <person name="Islam M.S."/>
            <person name="Haque M.S."/>
            <person name="Islam M.M."/>
            <person name="Emdad E.M."/>
            <person name="Halim A."/>
            <person name="Hossen Q.M.M."/>
            <person name="Hossain M.Z."/>
            <person name="Ahmed B."/>
            <person name="Rahim S."/>
            <person name="Rahman M.S."/>
            <person name="Alam M.M."/>
            <person name="Hou S."/>
            <person name="Wan X."/>
            <person name="Saito J.A."/>
            <person name="Alam M."/>
        </authorList>
    </citation>
    <scope>NUCLEOTIDE SEQUENCE [LARGE SCALE GENOMIC DNA]</scope>
    <source>
        <strain>MS6</strain>
    </source>
</reference>
<reference key="2">
    <citation type="journal article" date="2022" name="Front. Microbiol.">
        <title>Discovery and biosynthesis of macrophasetins from the plant pathogen fungus Macrophomina phaseolina.</title>
        <authorList>
            <person name="Yu C."/>
            <person name="Chen L."/>
            <person name="Gao Y.L."/>
            <person name="Liu J."/>
            <person name="Li P.L."/>
            <person name="Zhang M.L."/>
            <person name="Li Q."/>
            <person name="Zhang H.D."/>
            <person name="Tang M.C."/>
            <person name="Li L."/>
        </authorList>
    </citation>
    <scope>FUNCTION</scope>
</reference>
<gene>
    <name evidence="5" type="primary">mpsC</name>
    <name type="ORF">MPH_07626</name>
</gene>